<accession>B2IQ02</accession>
<reference key="1">
    <citation type="journal article" date="2009" name="BMC Genomics">
        <title>Genome evolution driven by host adaptations results in a more virulent and antimicrobial-resistant Streptococcus pneumoniae serotype 14.</title>
        <authorList>
            <person name="Ding F."/>
            <person name="Tang P."/>
            <person name="Hsu M.-H."/>
            <person name="Cui P."/>
            <person name="Hu S."/>
            <person name="Yu J."/>
            <person name="Chiu C.-H."/>
        </authorList>
    </citation>
    <scope>NUCLEOTIDE SEQUENCE [LARGE SCALE GENOMIC DNA]</scope>
    <source>
        <strain>CGSP14</strain>
    </source>
</reference>
<protein>
    <recommendedName>
        <fullName evidence="2">Large ribosomal subunit protein bL27</fullName>
    </recommendedName>
    <alternativeName>
        <fullName evidence="4">50S ribosomal protein L27</fullName>
    </alternativeName>
</protein>
<comment type="PTM">
    <text evidence="1">The N-terminus is cleaved by ribosomal processing cysteine protease Prp.</text>
</comment>
<comment type="similarity">
    <text evidence="2">Belongs to the bacterial ribosomal protein bL27 family.</text>
</comment>
<proteinExistence type="inferred from homology"/>
<dbReference type="EMBL" id="CP001033">
    <property type="protein sequence ID" value="ACB90426.1"/>
    <property type="molecule type" value="Genomic_DNA"/>
</dbReference>
<dbReference type="RefSeq" id="WP_000916509.1">
    <property type="nucleotide sequence ID" value="NC_010582.1"/>
</dbReference>
<dbReference type="SMR" id="B2IQ02"/>
<dbReference type="GeneID" id="93739803"/>
<dbReference type="KEGG" id="spw:SPCG_1174"/>
<dbReference type="HOGENOM" id="CLU_095424_4_0_9"/>
<dbReference type="GO" id="GO:0022625">
    <property type="term" value="C:cytosolic large ribosomal subunit"/>
    <property type="evidence" value="ECO:0007669"/>
    <property type="project" value="TreeGrafter"/>
</dbReference>
<dbReference type="GO" id="GO:0003735">
    <property type="term" value="F:structural constituent of ribosome"/>
    <property type="evidence" value="ECO:0007669"/>
    <property type="project" value="InterPro"/>
</dbReference>
<dbReference type="GO" id="GO:0006412">
    <property type="term" value="P:translation"/>
    <property type="evidence" value="ECO:0007669"/>
    <property type="project" value="UniProtKB-UniRule"/>
</dbReference>
<dbReference type="FunFam" id="2.40.50.100:FF:000004">
    <property type="entry name" value="50S ribosomal protein L27"/>
    <property type="match status" value="1"/>
</dbReference>
<dbReference type="Gene3D" id="2.40.50.100">
    <property type="match status" value="1"/>
</dbReference>
<dbReference type="HAMAP" id="MF_00539">
    <property type="entry name" value="Ribosomal_bL27"/>
    <property type="match status" value="1"/>
</dbReference>
<dbReference type="InterPro" id="IPR001684">
    <property type="entry name" value="Ribosomal_bL27"/>
</dbReference>
<dbReference type="InterPro" id="IPR018261">
    <property type="entry name" value="Ribosomal_bL27_CS"/>
</dbReference>
<dbReference type="NCBIfam" id="TIGR00062">
    <property type="entry name" value="L27"/>
    <property type="match status" value="1"/>
</dbReference>
<dbReference type="PANTHER" id="PTHR15893:SF0">
    <property type="entry name" value="LARGE RIBOSOMAL SUBUNIT PROTEIN BL27M"/>
    <property type="match status" value="1"/>
</dbReference>
<dbReference type="PANTHER" id="PTHR15893">
    <property type="entry name" value="RIBOSOMAL PROTEIN L27"/>
    <property type="match status" value="1"/>
</dbReference>
<dbReference type="Pfam" id="PF01016">
    <property type="entry name" value="Ribosomal_L27"/>
    <property type="match status" value="1"/>
</dbReference>
<dbReference type="PRINTS" id="PR00063">
    <property type="entry name" value="RIBOSOMALL27"/>
</dbReference>
<dbReference type="SUPFAM" id="SSF110324">
    <property type="entry name" value="Ribosomal L27 protein-like"/>
    <property type="match status" value="1"/>
</dbReference>
<dbReference type="PROSITE" id="PS00831">
    <property type="entry name" value="RIBOSOMAL_L27"/>
    <property type="match status" value="1"/>
</dbReference>
<gene>
    <name evidence="2" type="primary">rpmA</name>
    <name type="ordered locus">SPCG_1174</name>
</gene>
<organism>
    <name type="scientific">Streptococcus pneumoniae (strain CGSP14)</name>
    <dbReference type="NCBI Taxonomy" id="516950"/>
    <lineage>
        <taxon>Bacteria</taxon>
        <taxon>Bacillati</taxon>
        <taxon>Bacillota</taxon>
        <taxon>Bacilli</taxon>
        <taxon>Lactobacillales</taxon>
        <taxon>Streptococcaceae</taxon>
        <taxon>Streptococcus</taxon>
    </lineage>
</organism>
<name>RL27_STRPS</name>
<feature type="propeptide" id="PRO_0000459955" evidence="1">
    <location>
        <begin position="1"/>
        <end position="12"/>
    </location>
</feature>
<feature type="chain" id="PRO_1000128816" description="Large ribosomal subunit protein bL27">
    <location>
        <begin position="13"/>
        <end position="97"/>
    </location>
</feature>
<feature type="region of interest" description="Disordered" evidence="3">
    <location>
        <begin position="13"/>
        <end position="37"/>
    </location>
</feature>
<keyword id="KW-0687">Ribonucleoprotein</keyword>
<keyword id="KW-0689">Ribosomal protein</keyword>
<evidence type="ECO:0000250" key="1">
    <source>
        <dbReference type="UniProtKB" id="Q2FXT0"/>
    </source>
</evidence>
<evidence type="ECO:0000255" key="2">
    <source>
        <dbReference type="HAMAP-Rule" id="MF_00539"/>
    </source>
</evidence>
<evidence type="ECO:0000256" key="3">
    <source>
        <dbReference type="SAM" id="MobiDB-lite"/>
    </source>
</evidence>
<evidence type="ECO:0000305" key="4"/>
<sequence>MLKMTLNNLQLFAHKKGGGSTSNGRDSQAKRLGAKAADGQTVTGGSILYRQRGTHIYPGVNVGRGGDDTLFAKVEGVVRFERKGRDKKQVSVYPIAK</sequence>